<name>FDFT_NEUCR</name>
<keyword id="KW-0256">Endoplasmic reticulum</keyword>
<keyword id="KW-0414">Isoprene biosynthesis</keyword>
<keyword id="KW-0444">Lipid biosynthesis</keyword>
<keyword id="KW-0443">Lipid metabolism</keyword>
<keyword id="KW-0460">Magnesium</keyword>
<keyword id="KW-0472">Membrane</keyword>
<keyword id="KW-0511">Multifunctional enzyme</keyword>
<keyword id="KW-0521">NADP</keyword>
<keyword id="KW-1185">Reference proteome</keyword>
<keyword id="KW-0752">Steroid biosynthesis</keyword>
<keyword id="KW-0753">Steroid metabolism</keyword>
<keyword id="KW-0756">Sterol biosynthesis</keyword>
<keyword id="KW-1207">Sterol metabolism</keyword>
<keyword id="KW-0808">Transferase</keyword>
<keyword id="KW-0812">Transmembrane</keyword>
<keyword id="KW-1133">Transmembrane helix</keyword>
<protein>
    <recommendedName>
        <fullName>Probable squalene synthase</fullName>
        <shortName>SQS</shortName>
        <shortName>SS</shortName>
        <ecNumber>2.5.1.21</ecNumber>
    </recommendedName>
    <alternativeName>
        <fullName>FPP:FPP farnesyltransferase</fullName>
    </alternativeName>
    <alternativeName>
        <fullName>Farnesyl-diphosphate farnesyltransferase</fullName>
    </alternativeName>
</protein>
<gene>
    <name type="primary">erg-6</name>
    <name type="synonym">erg9</name>
    <name type="ORF">NCU06054</name>
</gene>
<sequence>MGAFTKAAYFLLHPNQLRSIVQWKVWHEPVHRRDPSKETETEKACFRHLELTSRSFSAVIQELNPELLMPICLFYLVLRGLDTIEDDMTIDLAKKEPLLREFADLMEIDGWTFTENGPNEKDRELLVHFDDVIAELKKVKKPYYDIIREITVKMGNGMADYALNAEHNTNGVNTIEEYELYCHYVAGLVGEGLTRLFVESNLANPALLERMELTESMGQFLQKTNIIRDIHEDYVDKRRFWPKTIWSKYVNTWDDMFKPENREKALQCSSEMVLNALKHTEDCLFYMAGMRDQSVFNFVAIPQAMAIATLELVFRNPAIFERNVKITKGDACQLMMESTQNLRVVCEVFRRYARRIHKKNDPRDPNYLAISVQCGKIEQFIESIFPTQDPKKIALAQAQNSNQTAANTTDNGDTTFLVLSMIGVLFVMGGLMIGAAWLMGARFDMAYEDITARVGTLVNGAAAVSSATVSSIPTTVMHQEL</sequence>
<feature type="chain" id="PRO_0000067449" description="Probable squalene synthase">
    <location>
        <begin position="1"/>
        <end position="481"/>
    </location>
</feature>
<feature type="transmembrane region" description="Helical" evidence="2">
    <location>
        <begin position="294"/>
        <end position="314"/>
    </location>
</feature>
<feature type="transmembrane region" description="Helical" evidence="2">
    <location>
        <begin position="416"/>
        <end position="436"/>
    </location>
</feature>
<reference key="1">
    <citation type="journal article" date="2003" name="Nature">
        <title>The genome sequence of the filamentous fungus Neurospora crassa.</title>
        <authorList>
            <person name="Galagan J.E."/>
            <person name="Calvo S.E."/>
            <person name="Borkovich K.A."/>
            <person name="Selker E.U."/>
            <person name="Read N.D."/>
            <person name="Jaffe D.B."/>
            <person name="FitzHugh W."/>
            <person name="Ma L.-J."/>
            <person name="Smirnov S."/>
            <person name="Purcell S."/>
            <person name="Rehman B."/>
            <person name="Elkins T."/>
            <person name="Engels R."/>
            <person name="Wang S."/>
            <person name="Nielsen C.B."/>
            <person name="Butler J."/>
            <person name="Endrizzi M."/>
            <person name="Qui D."/>
            <person name="Ianakiev P."/>
            <person name="Bell-Pedersen D."/>
            <person name="Nelson M.A."/>
            <person name="Werner-Washburne M."/>
            <person name="Selitrennikoff C.P."/>
            <person name="Kinsey J.A."/>
            <person name="Braun E.L."/>
            <person name="Zelter A."/>
            <person name="Schulte U."/>
            <person name="Kothe G.O."/>
            <person name="Jedd G."/>
            <person name="Mewes H.-W."/>
            <person name="Staben C."/>
            <person name="Marcotte E."/>
            <person name="Greenberg D."/>
            <person name="Roy A."/>
            <person name="Foley K."/>
            <person name="Naylor J."/>
            <person name="Stange-Thomann N."/>
            <person name="Barrett R."/>
            <person name="Gnerre S."/>
            <person name="Kamal M."/>
            <person name="Kamvysselis M."/>
            <person name="Mauceli E.W."/>
            <person name="Bielke C."/>
            <person name="Rudd S."/>
            <person name="Frishman D."/>
            <person name="Krystofova S."/>
            <person name="Rasmussen C."/>
            <person name="Metzenberg R.L."/>
            <person name="Perkins D.D."/>
            <person name="Kroken S."/>
            <person name="Cogoni C."/>
            <person name="Macino G."/>
            <person name="Catcheside D.E.A."/>
            <person name="Li W."/>
            <person name="Pratt R.J."/>
            <person name="Osmani S.A."/>
            <person name="DeSouza C.P.C."/>
            <person name="Glass N.L."/>
            <person name="Orbach M.J."/>
            <person name="Berglund J.A."/>
            <person name="Voelker R."/>
            <person name="Yarden O."/>
            <person name="Plamann M."/>
            <person name="Seiler S."/>
            <person name="Dunlap J.C."/>
            <person name="Radford A."/>
            <person name="Aramayo R."/>
            <person name="Natvig D.O."/>
            <person name="Alex L.A."/>
            <person name="Mannhaupt G."/>
            <person name="Ebbole D.J."/>
            <person name="Freitag M."/>
            <person name="Paulsen I."/>
            <person name="Sachs M.S."/>
            <person name="Lander E.S."/>
            <person name="Nusbaum C."/>
            <person name="Birren B.W."/>
        </authorList>
    </citation>
    <scope>NUCLEOTIDE SEQUENCE [LARGE SCALE GENOMIC DNA]</scope>
    <source>
        <strain>ATCC 24698 / 74-OR23-1A / CBS 708.71 / DSM 1257 / FGSC 987</strain>
    </source>
</reference>
<organism>
    <name type="scientific">Neurospora crassa (strain ATCC 24698 / 74-OR23-1A / CBS 708.71 / DSM 1257 / FGSC 987)</name>
    <dbReference type="NCBI Taxonomy" id="367110"/>
    <lineage>
        <taxon>Eukaryota</taxon>
        <taxon>Fungi</taxon>
        <taxon>Dikarya</taxon>
        <taxon>Ascomycota</taxon>
        <taxon>Pezizomycotina</taxon>
        <taxon>Sordariomycetes</taxon>
        <taxon>Sordariomycetidae</taxon>
        <taxon>Sordariales</taxon>
        <taxon>Sordariaceae</taxon>
        <taxon>Neurospora</taxon>
    </lineage>
</organism>
<dbReference type="EC" id="2.5.1.21"/>
<dbReference type="EMBL" id="CM002242">
    <property type="protein sequence ID" value="ESA41923.1"/>
    <property type="molecule type" value="Genomic_DNA"/>
</dbReference>
<dbReference type="RefSeq" id="XP_011395225.1">
    <property type="nucleotide sequence ID" value="XM_011396923.1"/>
</dbReference>
<dbReference type="SMR" id="Q7S4Z6"/>
<dbReference type="FunCoup" id="Q7S4Z6">
    <property type="interactions" value="292"/>
</dbReference>
<dbReference type="STRING" id="367110.Q7S4Z6"/>
<dbReference type="PaxDb" id="5141-EFNCRP00000005373"/>
<dbReference type="EnsemblFungi" id="ESA41923">
    <property type="protein sequence ID" value="ESA41923"/>
    <property type="gene ID" value="NCU06054"/>
</dbReference>
<dbReference type="GeneID" id="3875964"/>
<dbReference type="KEGG" id="ncr:NCU06054"/>
<dbReference type="VEuPathDB" id="FungiDB:NCU06054"/>
<dbReference type="HOGENOM" id="CLU_031981_2_1_1"/>
<dbReference type="InParanoid" id="Q7S4Z6"/>
<dbReference type="OMA" id="GEACQLM"/>
<dbReference type="OrthoDB" id="431150at2759"/>
<dbReference type="UniPathway" id="UPA00767">
    <property type="reaction ID" value="UER00751"/>
</dbReference>
<dbReference type="Proteomes" id="UP000001805">
    <property type="component" value="Chromosome 7, Linkage Group VII"/>
</dbReference>
<dbReference type="GO" id="GO:0005789">
    <property type="term" value="C:endoplasmic reticulum membrane"/>
    <property type="evidence" value="ECO:0000318"/>
    <property type="project" value="GO_Central"/>
</dbReference>
<dbReference type="GO" id="GO:0051996">
    <property type="term" value="F:squalene synthase [NAD(P)H] activity"/>
    <property type="evidence" value="ECO:0000318"/>
    <property type="project" value="GO_Central"/>
</dbReference>
<dbReference type="GO" id="GO:0006696">
    <property type="term" value="P:ergosterol biosynthetic process"/>
    <property type="evidence" value="ECO:0000318"/>
    <property type="project" value="GO_Central"/>
</dbReference>
<dbReference type="GO" id="GO:0045338">
    <property type="term" value="P:farnesyl diphosphate metabolic process"/>
    <property type="evidence" value="ECO:0000318"/>
    <property type="project" value="GO_Central"/>
</dbReference>
<dbReference type="GO" id="GO:0008299">
    <property type="term" value="P:isoprenoid biosynthetic process"/>
    <property type="evidence" value="ECO:0007669"/>
    <property type="project" value="UniProtKB-KW"/>
</dbReference>
<dbReference type="CDD" id="cd00683">
    <property type="entry name" value="Trans_IPPS_HH"/>
    <property type="match status" value="1"/>
</dbReference>
<dbReference type="FunFam" id="1.10.600.10:FF:000003">
    <property type="entry name" value="Farnesyl-diphosphate farnesyltransferase 1"/>
    <property type="match status" value="1"/>
</dbReference>
<dbReference type="Gene3D" id="1.10.600.10">
    <property type="entry name" value="Farnesyl Diphosphate Synthase"/>
    <property type="match status" value="1"/>
</dbReference>
<dbReference type="InterPro" id="IPR008949">
    <property type="entry name" value="Isoprenoid_synthase_dom_sf"/>
</dbReference>
<dbReference type="InterPro" id="IPR002060">
    <property type="entry name" value="Squ/phyt_synthse"/>
</dbReference>
<dbReference type="InterPro" id="IPR006449">
    <property type="entry name" value="Squal_synth-like"/>
</dbReference>
<dbReference type="InterPro" id="IPR019845">
    <property type="entry name" value="Squalene/phytoene_synthase_CS"/>
</dbReference>
<dbReference type="InterPro" id="IPR044844">
    <property type="entry name" value="Trans_IPPS_euk-type"/>
</dbReference>
<dbReference type="InterPro" id="IPR033904">
    <property type="entry name" value="Trans_IPPS_HH"/>
</dbReference>
<dbReference type="NCBIfam" id="TIGR01559">
    <property type="entry name" value="squal_synth"/>
    <property type="match status" value="1"/>
</dbReference>
<dbReference type="PANTHER" id="PTHR11626">
    <property type="entry name" value="FARNESYL-DIPHOSPHATE FARNESYLTRANSFERASE"/>
    <property type="match status" value="1"/>
</dbReference>
<dbReference type="PANTHER" id="PTHR11626:SF2">
    <property type="entry name" value="SQUALENE SYNTHASE"/>
    <property type="match status" value="1"/>
</dbReference>
<dbReference type="Pfam" id="PF00494">
    <property type="entry name" value="SQS_PSY"/>
    <property type="match status" value="1"/>
</dbReference>
<dbReference type="SFLD" id="SFLDS00005">
    <property type="entry name" value="Isoprenoid_Synthase_Type_I"/>
    <property type="match status" value="1"/>
</dbReference>
<dbReference type="SFLD" id="SFLDG01018">
    <property type="entry name" value="Squalene/Phytoene_Synthase_Lik"/>
    <property type="match status" value="1"/>
</dbReference>
<dbReference type="SUPFAM" id="SSF48576">
    <property type="entry name" value="Terpenoid synthases"/>
    <property type="match status" value="1"/>
</dbReference>
<dbReference type="PROSITE" id="PS00014">
    <property type="entry name" value="ER_TARGET"/>
    <property type="match status" value="1"/>
</dbReference>
<dbReference type="PROSITE" id="PS01044">
    <property type="entry name" value="SQUALEN_PHYTOEN_SYN_1"/>
    <property type="match status" value="1"/>
</dbReference>
<dbReference type="PROSITE" id="PS01045">
    <property type="entry name" value="SQUALEN_PHYTOEN_SYN_2"/>
    <property type="match status" value="1"/>
</dbReference>
<evidence type="ECO:0000250" key="1"/>
<evidence type="ECO:0000255" key="2"/>
<evidence type="ECO:0000255" key="3">
    <source>
        <dbReference type="PROSITE-ProRule" id="PRU10138"/>
    </source>
</evidence>
<evidence type="ECO:0000305" key="4"/>
<comment type="function">
    <text evidence="1">Catalyzes the condensation of 2 two farnesyl pyrophosphate moieties to form squalene. It is the first committed enzyme of the sterol biosynthesis pathway. Required for the biosynthesis of ergosterol (By similarity).</text>
</comment>
<comment type="catalytic activity">
    <reaction>
        <text>2 (2E,6E)-farnesyl diphosphate + NADPH + H(+) = squalene + 2 diphosphate + NADP(+)</text>
        <dbReference type="Rhea" id="RHEA:32295"/>
        <dbReference type="ChEBI" id="CHEBI:15378"/>
        <dbReference type="ChEBI" id="CHEBI:15440"/>
        <dbReference type="ChEBI" id="CHEBI:33019"/>
        <dbReference type="ChEBI" id="CHEBI:57783"/>
        <dbReference type="ChEBI" id="CHEBI:58349"/>
        <dbReference type="ChEBI" id="CHEBI:175763"/>
        <dbReference type="EC" id="2.5.1.21"/>
    </reaction>
</comment>
<comment type="catalytic activity">
    <reaction>
        <text>2 (2E,6E)-farnesyl diphosphate + NADH + H(+) = squalene + 2 diphosphate + NAD(+)</text>
        <dbReference type="Rhea" id="RHEA:32299"/>
        <dbReference type="ChEBI" id="CHEBI:15378"/>
        <dbReference type="ChEBI" id="CHEBI:15440"/>
        <dbReference type="ChEBI" id="CHEBI:33019"/>
        <dbReference type="ChEBI" id="CHEBI:57540"/>
        <dbReference type="ChEBI" id="CHEBI:57945"/>
        <dbReference type="ChEBI" id="CHEBI:175763"/>
        <dbReference type="EC" id="2.5.1.21"/>
    </reaction>
</comment>
<comment type="cofactor">
    <cofactor evidence="1">
        <name>Mg(2+)</name>
        <dbReference type="ChEBI" id="CHEBI:18420"/>
    </cofactor>
</comment>
<comment type="pathway">
    <text>Terpene metabolism; lanosterol biosynthesis; lanosterol from farnesyl diphosphate: step 1/3.</text>
</comment>
<comment type="subcellular location">
    <subcellularLocation>
        <location evidence="3">Endoplasmic reticulum membrane</location>
        <topology evidence="1">Multi-pass membrane protein</topology>
    </subcellularLocation>
</comment>
<comment type="similarity">
    <text evidence="4">Belongs to the phytoene/squalene synthase family.</text>
</comment>
<accession>Q7S4Z6</accession>
<accession>V5IKD8</accession>
<proteinExistence type="inferred from homology"/>